<sequence length="311" mass="34384">MANPLYQKHIISINDLSRDDLNLVLATAAKLKANPQPELLKHKVIASCFFEASTRTRLSFETSMHRLGASVVGFSDSANTSLGKKGETLADTISVISTYVDAIVMRHPQEGAARLATEFSGQVPVLNAGDGSNQHPTQTLLDLFTIQETQGRLDNLHIAMVGDLKYGRTVHSLTQALAKFSGNRFYFIAPDALAMPQYILDMLDEKGMAWSLHGSIEEVMADVDILYMTRVQKERLDPSEYANVKAQFVLRASDLNGARENMKVLHPLPRIDEITTDVDKTPHAWYFQQAGNGIFARQALLALVLNSELSL</sequence>
<keyword id="KW-0665">Pyrimidine biosynthesis</keyword>
<keyword id="KW-1185">Reference proteome</keyword>
<keyword id="KW-0808">Transferase</keyword>
<dbReference type="EC" id="2.1.3.2" evidence="2"/>
<dbReference type="EMBL" id="X05641">
    <property type="protein sequence ID" value="CAA29129.1"/>
    <property type="molecule type" value="Genomic_DNA"/>
</dbReference>
<dbReference type="EMBL" id="AE006468">
    <property type="protein sequence ID" value="AAL23279.1"/>
    <property type="molecule type" value="Genomic_DNA"/>
</dbReference>
<dbReference type="PIR" id="S00049">
    <property type="entry name" value="OWEBAC"/>
</dbReference>
<dbReference type="RefSeq" id="NP_463320.1">
    <property type="nucleotide sequence ID" value="NC_003197.2"/>
</dbReference>
<dbReference type="RefSeq" id="WP_000013055.1">
    <property type="nucleotide sequence ID" value="NC_003197.2"/>
</dbReference>
<dbReference type="SMR" id="P0A1Z4"/>
<dbReference type="STRING" id="99287.STM4460"/>
<dbReference type="PaxDb" id="99287-STM4460"/>
<dbReference type="GeneID" id="1255986"/>
<dbReference type="KEGG" id="stm:STM4460"/>
<dbReference type="PATRIC" id="fig|99287.12.peg.4693"/>
<dbReference type="HOGENOM" id="CLU_043846_1_2_6"/>
<dbReference type="OMA" id="VLIMHPG"/>
<dbReference type="PhylomeDB" id="P0A1Z4"/>
<dbReference type="BioCyc" id="SENT99287:STM4460-MONOMER"/>
<dbReference type="UniPathway" id="UPA00070">
    <property type="reaction ID" value="UER00116"/>
</dbReference>
<dbReference type="Proteomes" id="UP000001014">
    <property type="component" value="Chromosome"/>
</dbReference>
<dbReference type="GO" id="GO:0005737">
    <property type="term" value="C:cytoplasm"/>
    <property type="evidence" value="ECO:0000318"/>
    <property type="project" value="GO_Central"/>
</dbReference>
<dbReference type="GO" id="GO:0016597">
    <property type="term" value="F:amino acid binding"/>
    <property type="evidence" value="ECO:0007669"/>
    <property type="project" value="InterPro"/>
</dbReference>
<dbReference type="GO" id="GO:0004070">
    <property type="term" value="F:aspartate carbamoyltransferase activity"/>
    <property type="evidence" value="ECO:0007669"/>
    <property type="project" value="UniProtKB-UniRule"/>
</dbReference>
<dbReference type="GO" id="GO:0006207">
    <property type="term" value="P:'de novo' pyrimidine nucleobase biosynthetic process"/>
    <property type="evidence" value="ECO:0007669"/>
    <property type="project" value="InterPro"/>
</dbReference>
<dbReference type="GO" id="GO:0044205">
    <property type="term" value="P:'de novo' UMP biosynthetic process"/>
    <property type="evidence" value="ECO:0007669"/>
    <property type="project" value="UniProtKB-UniRule"/>
</dbReference>
<dbReference type="GO" id="GO:0006541">
    <property type="term" value="P:glutamine metabolic process"/>
    <property type="evidence" value="ECO:0000318"/>
    <property type="project" value="GO_Central"/>
</dbReference>
<dbReference type="FunFam" id="3.40.50.1370:FF:000001">
    <property type="entry name" value="Aspartate carbamoyltransferase"/>
    <property type="match status" value="1"/>
</dbReference>
<dbReference type="FunFam" id="3.40.50.1370:FF:000002">
    <property type="entry name" value="Aspartate carbamoyltransferase 2"/>
    <property type="match status" value="1"/>
</dbReference>
<dbReference type="Gene3D" id="3.40.50.1370">
    <property type="entry name" value="Aspartate/ornithine carbamoyltransferase"/>
    <property type="match status" value="2"/>
</dbReference>
<dbReference type="HAMAP" id="MF_00001">
    <property type="entry name" value="Asp_carb_tr"/>
    <property type="match status" value="1"/>
</dbReference>
<dbReference type="InterPro" id="IPR006132">
    <property type="entry name" value="Asp/Orn_carbamoyltranf_P-bd"/>
</dbReference>
<dbReference type="InterPro" id="IPR006130">
    <property type="entry name" value="Asp/Orn_carbamoylTrfase"/>
</dbReference>
<dbReference type="InterPro" id="IPR036901">
    <property type="entry name" value="Asp/Orn_carbamoylTrfase_sf"/>
</dbReference>
<dbReference type="InterPro" id="IPR002082">
    <property type="entry name" value="Asp_carbamoyltransf"/>
</dbReference>
<dbReference type="InterPro" id="IPR006131">
    <property type="entry name" value="Asp_carbamoyltransf_Asp/Orn-bd"/>
</dbReference>
<dbReference type="NCBIfam" id="TIGR00670">
    <property type="entry name" value="asp_carb_tr"/>
    <property type="match status" value="1"/>
</dbReference>
<dbReference type="NCBIfam" id="NF002032">
    <property type="entry name" value="PRK00856.1"/>
    <property type="match status" value="1"/>
</dbReference>
<dbReference type="PANTHER" id="PTHR45753:SF6">
    <property type="entry name" value="ASPARTATE CARBAMOYLTRANSFERASE"/>
    <property type="match status" value="1"/>
</dbReference>
<dbReference type="PANTHER" id="PTHR45753">
    <property type="entry name" value="ORNITHINE CARBAMOYLTRANSFERASE, MITOCHONDRIAL"/>
    <property type="match status" value="1"/>
</dbReference>
<dbReference type="Pfam" id="PF00185">
    <property type="entry name" value="OTCace"/>
    <property type="match status" value="1"/>
</dbReference>
<dbReference type="Pfam" id="PF02729">
    <property type="entry name" value="OTCace_N"/>
    <property type="match status" value="1"/>
</dbReference>
<dbReference type="PRINTS" id="PR00100">
    <property type="entry name" value="AOTCASE"/>
</dbReference>
<dbReference type="PRINTS" id="PR00101">
    <property type="entry name" value="ATCASE"/>
</dbReference>
<dbReference type="SUPFAM" id="SSF53671">
    <property type="entry name" value="Aspartate/ornithine carbamoyltransferase"/>
    <property type="match status" value="1"/>
</dbReference>
<dbReference type="PROSITE" id="PS00097">
    <property type="entry name" value="CARBAMOYLTRANSFERASE"/>
    <property type="match status" value="1"/>
</dbReference>
<evidence type="ECO:0000250" key="1"/>
<evidence type="ECO:0000255" key="2">
    <source>
        <dbReference type="HAMAP-Rule" id="MF_00001"/>
    </source>
</evidence>
<evidence type="ECO:0000305" key="3"/>
<name>PYRB_SALTY</name>
<accession>P0A1Z4</accession>
<accession>P08420</accession>
<proteinExistence type="inferred from homology"/>
<protein>
    <recommendedName>
        <fullName evidence="2">Aspartate carbamoyltransferase catalytic subunit</fullName>
        <ecNumber evidence="2">2.1.3.2</ecNumber>
    </recommendedName>
    <alternativeName>
        <fullName evidence="2">Aspartate transcarbamylase</fullName>
        <shortName evidence="2">ATCase</shortName>
    </alternativeName>
</protein>
<comment type="function">
    <text evidence="2">Catalyzes the condensation of carbamoyl phosphate and aspartate to form carbamoyl aspartate and inorganic phosphate, the committed step in the de novo pyrimidine nucleotide biosynthesis pathway.</text>
</comment>
<comment type="catalytic activity">
    <reaction evidence="2">
        <text>carbamoyl phosphate + L-aspartate = N-carbamoyl-L-aspartate + phosphate + H(+)</text>
        <dbReference type="Rhea" id="RHEA:20013"/>
        <dbReference type="ChEBI" id="CHEBI:15378"/>
        <dbReference type="ChEBI" id="CHEBI:29991"/>
        <dbReference type="ChEBI" id="CHEBI:32814"/>
        <dbReference type="ChEBI" id="CHEBI:43474"/>
        <dbReference type="ChEBI" id="CHEBI:58228"/>
        <dbReference type="EC" id="2.1.3.2"/>
    </reaction>
</comment>
<comment type="pathway">
    <text evidence="2">Pyrimidine metabolism; UMP biosynthesis via de novo pathway; (S)-dihydroorotate from bicarbonate: step 2/3.</text>
</comment>
<comment type="subunit">
    <text evidence="2">Heterododecamer (2C3:3R2) of six catalytic PyrB chains organized as two trimers (C3), and six regulatory PyrI chains organized as three dimers (R2).</text>
</comment>
<comment type="similarity">
    <text evidence="2 3">Belongs to the aspartate/ornithine carbamoyltransferase superfamily. ATCase family.</text>
</comment>
<reference key="1">
    <citation type="journal article" date="1987" name="Eur. J. Biochem.">
        <title>Cloning, nucleotide sequence and expression of the pyrBI operon of Salmonella typhimurium LT2.</title>
        <authorList>
            <person name="Michaels G."/>
            <person name="Kelln R.A."/>
            <person name="Nargang F.E."/>
        </authorList>
    </citation>
    <scope>NUCLEOTIDE SEQUENCE [GENOMIC DNA]</scope>
    <source>
        <strain>LT2</strain>
    </source>
</reference>
<reference key="2">
    <citation type="journal article" date="2001" name="Nature">
        <title>Complete genome sequence of Salmonella enterica serovar Typhimurium LT2.</title>
        <authorList>
            <person name="McClelland M."/>
            <person name="Sanderson K.E."/>
            <person name="Spieth J."/>
            <person name="Clifton S.W."/>
            <person name="Latreille P."/>
            <person name="Courtney L."/>
            <person name="Porwollik S."/>
            <person name="Ali J."/>
            <person name="Dante M."/>
            <person name="Du F."/>
            <person name="Hou S."/>
            <person name="Layman D."/>
            <person name="Leonard S."/>
            <person name="Nguyen C."/>
            <person name="Scott K."/>
            <person name="Holmes A."/>
            <person name="Grewal N."/>
            <person name="Mulvaney E."/>
            <person name="Ryan E."/>
            <person name="Sun H."/>
            <person name="Florea L."/>
            <person name="Miller W."/>
            <person name="Stoneking T."/>
            <person name="Nhan M."/>
            <person name="Waterston R."/>
            <person name="Wilson R.K."/>
        </authorList>
    </citation>
    <scope>NUCLEOTIDE SEQUENCE [LARGE SCALE GENOMIC DNA]</scope>
    <source>
        <strain>LT2 / SGSC1412 / ATCC 700720</strain>
    </source>
</reference>
<feature type="initiator methionine" description="Removed" evidence="1">
    <location>
        <position position="1"/>
    </location>
</feature>
<feature type="chain" id="PRO_0000113189" description="Aspartate carbamoyltransferase catalytic subunit">
    <location>
        <begin position="2"/>
        <end position="311"/>
    </location>
</feature>
<feature type="binding site" evidence="2">
    <location>
        <position position="55"/>
    </location>
    <ligand>
        <name>carbamoyl phosphate</name>
        <dbReference type="ChEBI" id="CHEBI:58228"/>
    </ligand>
</feature>
<feature type="binding site" evidence="2">
    <location>
        <position position="56"/>
    </location>
    <ligand>
        <name>carbamoyl phosphate</name>
        <dbReference type="ChEBI" id="CHEBI:58228"/>
    </ligand>
</feature>
<feature type="binding site" evidence="2">
    <location>
        <position position="85"/>
    </location>
    <ligand>
        <name>L-aspartate</name>
        <dbReference type="ChEBI" id="CHEBI:29991"/>
    </ligand>
</feature>
<feature type="binding site" evidence="2">
    <location>
        <position position="106"/>
    </location>
    <ligand>
        <name>carbamoyl phosphate</name>
        <dbReference type="ChEBI" id="CHEBI:58228"/>
    </ligand>
</feature>
<feature type="binding site" evidence="2">
    <location>
        <position position="135"/>
    </location>
    <ligand>
        <name>carbamoyl phosphate</name>
        <dbReference type="ChEBI" id="CHEBI:58228"/>
    </ligand>
</feature>
<feature type="binding site" evidence="2">
    <location>
        <position position="138"/>
    </location>
    <ligand>
        <name>carbamoyl phosphate</name>
        <dbReference type="ChEBI" id="CHEBI:58228"/>
    </ligand>
</feature>
<feature type="binding site" evidence="2">
    <location>
        <position position="168"/>
    </location>
    <ligand>
        <name>L-aspartate</name>
        <dbReference type="ChEBI" id="CHEBI:29991"/>
    </ligand>
</feature>
<feature type="binding site" evidence="2">
    <location>
        <position position="230"/>
    </location>
    <ligand>
        <name>L-aspartate</name>
        <dbReference type="ChEBI" id="CHEBI:29991"/>
    </ligand>
</feature>
<feature type="binding site" evidence="2">
    <location>
        <position position="268"/>
    </location>
    <ligand>
        <name>carbamoyl phosphate</name>
        <dbReference type="ChEBI" id="CHEBI:58228"/>
    </ligand>
</feature>
<feature type="binding site" evidence="2">
    <location>
        <position position="269"/>
    </location>
    <ligand>
        <name>carbamoyl phosphate</name>
        <dbReference type="ChEBI" id="CHEBI:58228"/>
    </ligand>
</feature>
<feature type="sequence conflict" description="In Ref. 1; CAA29129." evidence="3" ref="1">
    <original>SLTQA</original>
    <variation>FAKPRT</variation>
    <location>
        <begin position="172"/>
        <end position="176"/>
    </location>
</feature>
<feature type="sequence conflict" description="In Ref. 1; CAA29129." evidence="3" ref="1">
    <original>AS</original>
    <variation>P</variation>
    <location>
        <begin position="252"/>
        <end position="253"/>
    </location>
</feature>
<feature type="sequence conflict" description="In Ref. 1; CAA29129." evidence="3" ref="1">
    <original>R</original>
    <variation>A</variation>
    <location>
        <position position="297"/>
    </location>
</feature>
<organism>
    <name type="scientific">Salmonella typhimurium (strain LT2 / SGSC1412 / ATCC 700720)</name>
    <dbReference type="NCBI Taxonomy" id="99287"/>
    <lineage>
        <taxon>Bacteria</taxon>
        <taxon>Pseudomonadati</taxon>
        <taxon>Pseudomonadota</taxon>
        <taxon>Gammaproteobacteria</taxon>
        <taxon>Enterobacterales</taxon>
        <taxon>Enterobacteriaceae</taxon>
        <taxon>Salmonella</taxon>
    </lineage>
</organism>
<gene>
    <name evidence="2" type="primary">pyrB</name>
    <name type="ordered locus">STM4460</name>
</gene>